<gene>
    <name evidence="1" type="primary">diaA</name>
    <name type="ordered locus">NT01EI_0612</name>
</gene>
<evidence type="ECO:0000255" key="1">
    <source>
        <dbReference type="HAMAP-Rule" id="MF_01157"/>
    </source>
</evidence>
<sequence length="196" mass="20952">MLERIKGCFTESIQTQIAAAEALPDAISRAALTLVQSLLNGNKILCCGNGASGANAQHFAATLINRFETERPSLPAIALNADSVVLTAIGNDRLHDEIYAKQVRALGHAGDVLLAISTRGNSRDIVKAVEAAVTRDMTIVALTGYDGGELAGLLGQQDVEIRIPSHHSTRIQEMHMLTVNCLCDLIDNTLFPHQAD</sequence>
<comment type="function">
    <text evidence="1">Required for the timely initiation of chromosomal replication via direct interactions with the DnaA initiator protein.</text>
</comment>
<comment type="subunit">
    <text evidence="1">Homotetramer; dimer of dimers.</text>
</comment>
<comment type="similarity">
    <text evidence="1">Belongs to the SIS family. DiaA subfamily.</text>
</comment>
<dbReference type="EMBL" id="CP001600">
    <property type="protein sequence ID" value="ACR67840.1"/>
    <property type="molecule type" value="Genomic_DNA"/>
</dbReference>
<dbReference type="RefSeq" id="WP_015870037.1">
    <property type="nucleotide sequence ID" value="NZ_CP169062.1"/>
</dbReference>
<dbReference type="SMR" id="C5B766"/>
<dbReference type="STRING" id="67780.B6E78_13755"/>
<dbReference type="GeneID" id="69537687"/>
<dbReference type="KEGG" id="eic:NT01EI_0612"/>
<dbReference type="PATRIC" id="fig|634503.3.peg.555"/>
<dbReference type="HOGENOM" id="CLU_080999_3_1_6"/>
<dbReference type="OrthoDB" id="9810929at2"/>
<dbReference type="Proteomes" id="UP000001485">
    <property type="component" value="Chromosome"/>
</dbReference>
<dbReference type="GO" id="GO:0097367">
    <property type="term" value="F:carbohydrate derivative binding"/>
    <property type="evidence" value="ECO:0007669"/>
    <property type="project" value="InterPro"/>
</dbReference>
<dbReference type="GO" id="GO:1901135">
    <property type="term" value="P:carbohydrate derivative metabolic process"/>
    <property type="evidence" value="ECO:0007669"/>
    <property type="project" value="InterPro"/>
</dbReference>
<dbReference type="GO" id="GO:0006260">
    <property type="term" value="P:DNA replication"/>
    <property type="evidence" value="ECO:0007669"/>
    <property type="project" value="UniProtKB-UniRule"/>
</dbReference>
<dbReference type="CDD" id="cd05006">
    <property type="entry name" value="SIS_GmhA"/>
    <property type="match status" value="1"/>
</dbReference>
<dbReference type="FunFam" id="3.40.50.10490:FF:000006">
    <property type="entry name" value="DnaA initiator-associating protein DiaA"/>
    <property type="match status" value="1"/>
</dbReference>
<dbReference type="Gene3D" id="3.40.50.10490">
    <property type="entry name" value="Glucose-6-phosphate isomerase like protein, domain 1"/>
    <property type="match status" value="1"/>
</dbReference>
<dbReference type="HAMAP" id="MF_01157">
    <property type="entry name" value="SIS_DiaA"/>
    <property type="match status" value="1"/>
</dbReference>
<dbReference type="InterPro" id="IPR023070">
    <property type="entry name" value="DiaA"/>
</dbReference>
<dbReference type="InterPro" id="IPR035461">
    <property type="entry name" value="GmhA/DiaA"/>
</dbReference>
<dbReference type="InterPro" id="IPR001347">
    <property type="entry name" value="SIS_dom"/>
</dbReference>
<dbReference type="InterPro" id="IPR046348">
    <property type="entry name" value="SIS_dom_sf"/>
</dbReference>
<dbReference type="InterPro" id="IPR050099">
    <property type="entry name" value="SIS_GmhA/DiaA_subfam"/>
</dbReference>
<dbReference type="NCBIfam" id="NF008138">
    <property type="entry name" value="PRK10886.1"/>
    <property type="match status" value="1"/>
</dbReference>
<dbReference type="PANTHER" id="PTHR30390:SF6">
    <property type="entry name" value="DNAA INITIATOR-ASSOCIATING PROTEIN DIAA"/>
    <property type="match status" value="1"/>
</dbReference>
<dbReference type="PANTHER" id="PTHR30390">
    <property type="entry name" value="SEDOHEPTULOSE 7-PHOSPHATE ISOMERASE / DNAA INITIATOR-ASSOCIATING FACTOR FOR REPLICATION INITIATION"/>
    <property type="match status" value="1"/>
</dbReference>
<dbReference type="Pfam" id="PF13580">
    <property type="entry name" value="SIS_2"/>
    <property type="match status" value="1"/>
</dbReference>
<dbReference type="SUPFAM" id="SSF53697">
    <property type="entry name" value="SIS domain"/>
    <property type="match status" value="1"/>
</dbReference>
<dbReference type="PROSITE" id="PS51464">
    <property type="entry name" value="SIS"/>
    <property type="match status" value="1"/>
</dbReference>
<keyword id="KW-0235">DNA replication</keyword>
<proteinExistence type="inferred from homology"/>
<accession>C5B766</accession>
<protein>
    <recommendedName>
        <fullName evidence="1">DnaA initiator-associating protein DiaA</fullName>
    </recommendedName>
</protein>
<organism>
    <name type="scientific">Edwardsiella ictaluri (strain 93-146)</name>
    <dbReference type="NCBI Taxonomy" id="634503"/>
    <lineage>
        <taxon>Bacteria</taxon>
        <taxon>Pseudomonadati</taxon>
        <taxon>Pseudomonadota</taxon>
        <taxon>Gammaproteobacteria</taxon>
        <taxon>Enterobacterales</taxon>
        <taxon>Hafniaceae</taxon>
        <taxon>Edwardsiella</taxon>
    </lineage>
</organism>
<reference key="1">
    <citation type="submission" date="2009-03" db="EMBL/GenBank/DDBJ databases">
        <title>Complete genome sequence of Edwardsiella ictaluri 93-146.</title>
        <authorList>
            <person name="Williams M.L."/>
            <person name="Gillaspy A.F."/>
            <person name="Dyer D.W."/>
            <person name="Thune R.L."/>
            <person name="Waldbieser G.C."/>
            <person name="Schuster S.C."/>
            <person name="Gipson J."/>
            <person name="Zaitshik J."/>
            <person name="Landry C."/>
            <person name="Lawrence M.L."/>
        </authorList>
    </citation>
    <scope>NUCLEOTIDE SEQUENCE [LARGE SCALE GENOMIC DNA]</scope>
    <source>
        <strain>93-146</strain>
    </source>
</reference>
<feature type="chain" id="PRO_1000213697" description="DnaA initiator-associating protein DiaA">
    <location>
        <begin position="1"/>
        <end position="196"/>
    </location>
</feature>
<feature type="domain" description="SIS" evidence="1">
    <location>
        <begin position="34"/>
        <end position="196"/>
    </location>
</feature>
<name>DIAA_EDWI9</name>